<reference key="1">
    <citation type="journal article" date="1997" name="Genes Dev.">
        <title>Three human RNA polymerase III-specific subunits form a subcomplex with a selective function in specific transcription initiation.</title>
        <authorList>
            <person name="Wang Z."/>
            <person name="Roeder R.G."/>
        </authorList>
    </citation>
    <scope>NUCLEOTIDE SEQUENCE [MRNA]</scope>
    <scope>INTERACTION WITH POLR3G AND POLR3F</scope>
    <scope>VARIANT ARG-243</scope>
    <source>
        <tissue>Cervix carcinoma</tissue>
    </source>
</reference>
<reference key="2">
    <citation type="journal article" date="2002" name="Arthritis Rheum.">
        <title>Identification of an immunodominant epitope on RNA polymerase III recognized by systemic sclerosis sera: application to enzyme-linked immunosorbent assay.</title>
        <authorList>
            <person name="Kuwana M."/>
            <person name="Kimura K."/>
            <person name="Kawakami Y."/>
        </authorList>
    </citation>
    <scope>NUCLEOTIDE SEQUENCE [MRNA]</scope>
    <scope>IDENTIFICATION AS ANTIGEN IN SYSTEMIC SCLEROSIS</scope>
</reference>
<reference key="3">
    <citation type="submission" date="1999-04" db="EMBL/GenBank/DDBJ databases">
        <title>Genomic structure of human RNA polymerase III subunit (RPC62).</title>
        <authorList>
            <person name="Totaro A."/>
        </authorList>
    </citation>
    <scope>NUCLEOTIDE SEQUENCE [GENOMIC DNA]</scope>
</reference>
<reference key="4">
    <citation type="journal article" date="2004" name="Genome Res.">
        <title>The status, quality, and expansion of the NIH full-length cDNA project: the Mammalian Gene Collection (MGC).</title>
        <authorList>
            <consortium name="The MGC Project Team"/>
        </authorList>
    </citation>
    <scope>NUCLEOTIDE SEQUENCE [LARGE SCALE MRNA]</scope>
    <source>
        <tissue>Ovary</tissue>
    </source>
</reference>
<reference key="5">
    <citation type="journal article" date="1999" name="Mol. Cell. Biol.">
        <title>The TFIIIC90 subunit of TFIIIC interacts with multiple components of the RNA polymerase III machinery and contains a histone-specific acetyltransferase activity.</title>
        <authorList>
            <person name="Hsieh Y.-J."/>
            <person name="Kundu T.K."/>
            <person name="Wang Z."/>
            <person name="Kovelman R."/>
            <person name="Roeder R.G."/>
        </authorList>
    </citation>
    <scope>INTERACTION WITH GTF3C4</scope>
</reference>
<reference key="6">
    <citation type="journal article" date="2001" name="Proc. Natl. Acad. Sci. U.S.A.">
        <title>Nuclear particles containing RNA polymerase III complexes associated with the junctional plaque protein plakophilin 2.</title>
        <authorList>
            <person name="Mertens C."/>
            <person name="Hofmann I."/>
            <person name="Wang Z."/>
            <person name="Teichmann M."/>
            <person name="Sepehri Chong S."/>
            <person name="Schnoelzer M."/>
            <person name="Franke W.W."/>
        </authorList>
    </citation>
    <scope>INTERACTION WITH PKP2</scope>
</reference>
<reference key="7">
    <citation type="journal article" date="2002" name="Mol. Cell. Biol.">
        <title>Characterization of human RNA polymerase III identifies orthologues for Saccharomyces cerevisiae RNA polymerase III subunits.</title>
        <authorList>
            <person name="Hu P."/>
            <person name="Wu S."/>
            <person name="Sun Y."/>
            <person name="Yuan C.-C."/>
            <person name="Kobayashi R."/>
            <person name="Myers M.P."/>
            <person name="Hernandez N."/>
        </authorList>
    </citation>
    <scope>IDENTIFICATION IN THE RNA POL III COMPLEX</scope>
    <scope>IDENTIFICATION BY MASS SPECTROMETRY</scope>
</reference>
<reference key="8">
    <citation type="journal article" date="2008" name="Proc. Natl. Acad. Sci. U.S.A.">
        <title>A quantitative atlas of mitotic phosphorylation.</title>
        <authorList>
            <person name="Dephoure N."/>
            <person name="Zhou C."/>
            <person name="Villen J."/>
            <person name="Beausoleil S.A."/>
            <person name="Bakalarski C.E."/>
            <person name="Elledge S.J."/>
            <person name="Gygi S.P."/>
        </authorList>
    </citation>
    <scope>PHOSPHORYLATION [LARGE SCALE ANALYSIS] AT SER-194</scope>
    <scope>IDENTIFICATION BY MASS SPECTROMETRY [LARGE SCALE ANALYSIS]</scope>
    <source>
        <tissue>Cervix carcinoma</tissue>
    </source>
</reference>
<reference key="9">
    <citation type="journal article" date="2009" name="Cell">
        <title>RNA polymerase III detects cytosolic DNA and induces type I interferons through the RIG-I pathway.</title>
        <authorList>
            <person name="Chiu Y.-H."/>
            <person name="Macmillan J.B."/>
            <person name="Chen Z.J."/>
        </authorList>
    </citation>
    <scope>FUNCTION</scope>
</reference>
<reference key="10">
    <citation type="journal article" date="2009" name="Nat. Immunol.">
        <title>RIG-I-dependent sensing of poly(dA:dT) through the induction of an RNA polymerase III-transcribed RNA intermediate.</title>
        <authorList>
            <person name="Ablasser A."/>
            <person name="Bauernfeind F."/>
            <person name="Hartmann G."/>
            <person name="Latz E."/>
            <person name="Fitzgerald K.A."/>
            <person name="Hornung V."/>
        </authorList>
    </citation>
    <scope>FUNCTION</scope>
</reference>
<reference key="11">
    <citation type="journal article" date="2010" name="Genome Res.">
        <title>Defining the RNA polymerase III transcriptome: Genome-wide localization of the RNA polymerase III transcription machinery in human cells.</title>
        <authorList>
            <person name="Canella D."/>
            <person name="Praz V."/>
            <person name="Reina J.H."/>
            <person name="Cousin P."/>
            <person name="Hernandez N."/>
        </authorList>
    </citation>
    <scope>FUNCTION OF POL III</scope>
</reference>
<reference key="12">
    <citation type="journal article" date="2011" name="BMC Syst. Biol.">
        <title>Initial characterization of the human central proteome.</title>
        <authorList>
            <person name="Burkard T.R."/>
            <person name="Planyavsky M."/>
            <person name="Kaupe I."/>
            <person name="Breitwieser F.P."/>
            <person name="Buerckstuemmer T."/>
            <person name="Bennett K.L."/>
            <person name="Superti-Furga G."/>
            <person name="Colinge J."/>
        </authorList>
    </citation>
    <scope>IDENTIFICATION BY MASS SPECTROMETRY [LARGE SCALE ANALYSIS]</scope>
</reference>
<reference key="13">
    <citation type="journal article" date="2011" name="Sci. Signal.">
        <title>System-wide temporal characterization of the proteome and phosphoproteome of human embryonic stem cell differentiation.</title>
        <authorList>
            <person name="Rigbolt K.T."/>
            <person name="Prokhorova T.A."/>
            <person name="Akimov V."/>
            <person name="Henningsen J."/>
            <person name="Johansen P.T."/>
            <person name="Kratchmarova I."/>
            <person name="Kassem M."/>
            <person name="Mann M."/>
            <person name="Olsen J.V."/>
            <person name="Blagoev B."/>
        </authorList>
    </citation>
    <scope>IDENTIFICATION BY MASS SPECTROMETRY [LARGE SCALE ANALYSIS]</scope>
</reference>
<reference key="14">
    <citation type="journal article" date="2014" name="Genome Res.">
        <title>Gene duplication and neofunctionalization: POLR3G and POLR3GL.</title>
        <authorList>
            <person name="Renaud M."/>
            <person name="Praz V."/>
            <person name="Vieu E."/>
            <person name="Florens L."/>
            <person name="Washburn M.P."/>
            <person name="l'Hote P."/>
            <person name="Hernandez N."/>
        </authorList>
    </citation>
    <scope>INTERACTION WITH POLR3G AND POLR3GL</scope>
</reference>
<reference key="15">
    <citation type="journal article" date="2022" name="Nat. Commun.">
        <title>A cancer-associated RNA polymerase III identity drives robust transcription and expression of snaR-A non-coding RNA.</title>
        <authorList>
            <person name="Van Bortle K."/>
            <person name="Marciano D.P."/>
            <person name="Liu Q."/>
            <person name="Chou T."/>
            <person name="Lipchik A.M."/>
            <person name="Gollapudi S."/>
            <person name="Geller B.S."/>
            <person name="Monte E."/>
            <person name="Kamakaka R.T."/>
            <person name="Snyder M.P."/>
        </authorList>
    </citation>
    <scope>FUNCTION OF POL III</scope>
    <scope>SUBUNIT</scope>
</reference>
<reference key="16">
    <citation type="journal article" date="2011" name="Nat. Struct. Mol. Biol.">
        <title>Structure-function analysis of hRPC62 provides insights into RNA polymerase III transcription initiation.</title>
        <authorList>
            <person name="Lefevre S."/>
            <person name="Dumay-Odelot H."/>
            <person name="El-Ayoubi L."/>
            <person name="Budd A."/>
            <person name="Legrand P."/>
            <person name="Pinaud N."/>
            <person name="Teichmann M."/>
            <person name="Fribourg S."/>
        </authorList>
    </citation>
    <scope>X-RAY CRYSTALLOGRAPHY (2.80 ANGSTROMS)</scope>
    <scope>FUNCTION</scope>
    <scope>INTERACTION WITH POLR3F; POLR3G AND POLR3GL</scope>
    <scope>MUTAGENESIS OF 51-LYS-LYS-52; LEU-312; ARG-357; 364-ARG--ARG-367; LYS-389; 445-ASN--ARG-449 AND 466-ARG--ILE-470</scope>
</reference>
<reference key="17">
    <citation type="journal article" date="2015" name="J. Struct. Biol.">
        <title>Structural analysis of human RPC32beta-RPC62 complex.</title>
        <authorList>
            <person name="Boissier F."/>
            <person name="Dumay-Odelot H."/>
            <person name="Teichmann M."/>
            <person name="Fribourg S."/>
        </authorList>
    </citation>
    <scope>X-RAY CRYSTALLOGRAPHY (7.00 ANGSTROMS) IN COMPLEX WITH POLR3GL</scope>
</reference>
<reference key="18">
    <citation type="journal article" date="2020" name="Nat. Commun.">
        <title>Structure of human RNA polymerase III.</title>
        <authorList>
            <person name="Ramsay E.P."/>
            <person name="Abascal-Palacios G."/>
            <person name="Daiss J.L."/>
            <person name="King H."/>
            <person name="Gouge J."/>
            <person name="Pilsl M."/>
            <person name="Beuron F."/>
            <person name="Morris E."/>
            <person name="Gunkel P."/>
            <person name="Engel C."/>
            <person name="Vannini A."/>
        </authorList>
    </citation>
    <scope>STRUCTURE BY ELECTRON MICROSCOPY (4.00 ANGSTROMS)</scope>
    <scope>SUBUNIT</scope>
    <scope>SUBCELLULAR LOCATION</scope>
</reference>
<reference key="19">
    <citation type="journal article" date="2021" name="Cell Res.">
        <title>Structure of human RNA polymerase III elongation complex.</title>
        <authorList>
            <person name="Li L."/>
            <person name="Yu Z."/>
            <person name="Zhao D."/>
            <person name="Ren Y."/>
            <person name="Hou H."/>
            <person name="Xu Y."/>
        </authorList>
    </citation>
    <scope>STRUCTURE BY ELECTRON MICROSCOPY (3.35 ANGSTROMS)</scope>
    <scope>SUBUNIT</scope>
</reference>
<reference key="20">
    <citation type="journal article" date="2021" name="Nat. Commun.">
        <title>Structural insights into RNA polymerase III-mediated transcription termination through trapping poly-deoxythymidine.</title>
        <authorList>
            <person name="Hou H."/>
            <person name="Li Y."/>
            <person name="Wang M."/>
            <person name="Liu A."/>
            <person name="Yu Z."/>
            <person name="Chen K."/>
            <person name="Zhao D."/>
            <person name="Xu Y."/>
        </authorList>
    </citation>
    <scope>STRUCTURE BY ELECTRON MICROSCOPY (3.60 ANGSTROMS)</scope>
    <scope>FUNCTION</scope>
    <scope>SUBUNIT</scope>
</reference>
<reference key="21">
    <citation type="journal article" date="2021" name="Nat. Struct. Mol. Biol.">
        <title>Cryo-EM structures of human RNA polymerase III in its unbound and transcribing states.</title>
        <authorList>
            <person name="Girbig M."/>
            <person name="Misiaszek A.D."/>
            <person name="Vorlander M.K."/>
            <person name="Lafita A."/>
            <person name="Grotsch H."/>
            <person name="Baudin F."/>
            <person name="Bateman A."/>
            <person name="Muller C.W."/>
        </authorList>
    </citation>
    <scope>STRUCTURE BY ELECTRON MICROSCOPY (2.80 ANGSTROMS)</scope>
    <scope>FUNCTION</scope>
    <scope>SUBUNIT</scope>
</reference>
<reference key="22">
    <citation type="journal article" date="2021" name="Nat. Struct. Mol. Biol.">
        <title>Structural insights into transcriptional regulation of human RNA polymerase III.</title>
        <authorList>
            <person name="Wang Q."/>
            <person name="Li S."/>
            <person name="Wan F."/>
            <person name="Xu Y."/>
            <person name="Wu Z."/>
            <person name="Cao M."/>
            <person name="Lan P."/>
            <person name="Lei M."/>
            <person name="Wu J."/>
        </authorList>
    </citation>
    <scope>STRUCTURE BY ELECTRON MICROSCOPY (2.90 ANGSTROMS)</scope>
    <scope>FUNCTION</scope>
    <scope>SUBUNIT</scope>
</reference>
<name>RPC3_HUMAN</name>
<keyword id="KW-0002">3D-structure</keyword>
<keyword id="KW-0051">Antiviral defense</keyword>
<keyword id="KW-0238">DNA-binding</keyword>
<keyword id="KW-0240">DNA-directed RNA polymerase</keyword>
<keyword id="KW-0391">Immunity</keyword>
<keyword id="KW-0399">Innate immunity</keyword>
<keyword id="KW-0539">Nucleus</keyword>
<keyword id="KW-0597">Phosphoprotein</keyword>
<keyword id="KW-1267">Proteomics identification</keyword>
<keyword id="KW-1185">Reference proteome</keyword>
<keyword id="KW-0804">Transcription</keyword>
<organism>
    <name type="scientific">Homo sapiens</name>
    <name type="common">Human</name>
    <dbReference type="NCBI Taxonomy" id="9606"/>
    <lineage>
        <taxon>Eukaryota</taxon>
        <taxon>Metazoa</taxon>
        <taxon>Chordata</taxon>
        <taxon>Craniata</taxon>
        <taxon>Vertebrata</taxon>
        <taxon>Euteleostomi</taxon>
        <taxon>Mammalia</taxon>
        <taxon>Eutheria</taxon>
        <taxon>Euarchontoglires</taxon>
        <taxon>Primates</taxon>
        <taxon>Haplorrhini</taxon>
        <taxon>Catarrhini</taxon>
        <taxon>Hominidae</taxon>
        <taxon>Homo</taxon>
    </lineage>
</organism>
<comment type="function">
    <text evidence="6 7 8 9 13 14 16 17">DNA-dependent RNA polymerase catalyzes the transcription of DNA into RNA using the four ribonucleoside triphosphates as substrates (PubMed:20413673, PubMed:33558764, PubMed:33558766, PubMed:34675218, PubMed:35637192). Specific peripheric component of RNA polymerase III (Pol III) which synthesizes small non-coding RNAs including 5S rRNA, snRNAs, tRNAs and miRNAs from at least 500 distinct genomic loci (PubMed:20413673, PubMed:33558764, PubMed:33558766, PubMed:35637192). Part of POLR3C/RPC3-POLR3F/RPC6-POLR3G/RPC7 heterotrimer, coordinates the dynamics of Pol III stalk and clamp modules during the transition from apo to elongation state (PubMed:33558764, PubMed:33558766). Pol III plays a key role in sensing and limiting infection by intracellular bacteria and DNA viruses. Acts as a nuclear and cytosolic DNA sensor involved in innate immune response. Can sense non-self dsDNA that serves as template for transcription into dsRNA. The non-self RNA polymerase III transcripts, such as Epstein-Barr virus-encoded RNAs (EBERs) induce type I interferon and NF-kappa-B through the RIG-I pathway (PubMed:19609254, PubMed:19631370). Preferentially binds single-stranded DNA (ssDNA) in a sequence-independent manner (PubMed:21358628).</text>
</comment>
<comment type="subunit">
    <text evidence="1 3 4 5 9 10 11 12 13 14 15 16 17 18">Component of the RNA polymerase III complex consisting of 17 subunits: a ten-subunit horseshoe-shaped catalytic core composed of POLR3A/RPC1, POLR3B/RPC2, POLR1C/RPAC1, POLR1D/RPAC2, POLR3K/RPC10, POLR2E/RPABC1, POLR2F/RPABC2, POLR2H/RPABC3, POLR2K/RPABC4 and POLR2L/RPABC5; a mobile stalk composed of two subunits POLR3H/RPC8 and CRCP/RPC9, protruding from the core and functioning primarily in transcription initiation; and additional subunits homologous to general transcription factors of the RNA polymerase II machinery, POLR3C/RPC3-POLR3F/RPC6-POLR3G/RPC7 heterotrimer required for transcription initiation and POLR3D/RPC4-POLR3E/RPC5 heterodimer involved in both transcription initiation and termination (PubMed:12391170, PubMed:33335104, PubMed:33558764, PubMed:33558766, PubMed:33674783, PubMed:34675218, PubMed:35637192, PubMed:9171375). Directly interacts with POLR3G/RPC7 and POLR3GL (PubMed:21358628, PubMed:24107381, PubMed:26394183). Directly interacts with POLR3F/RPC6 (PubMed:26394183). Interacts with GTF3C4 (PubMed:10523658). As part of the RNA polymerase III complex, interacts with PKP2 (PubMed:11416169).</text>
</comment>
<comment type="interaction">
    <interactant intactId="EBI-5452779">
        <id>Q9BUI4</id>
    </interactant>
    <interactant intactId="EBI-5661893">
        <id>Q86SG2</id>
        <label>ANKRD23</label>
    </interactant>
    <organismsDiffer>false</organismsDiffer>
    <experiments>3</experiments>
</comment>
<comment type="interaction">
    <interactant intactId="EBI-5452779">
        <id>Q9BUI4</id>
    </interactant>
    <interactant intactId="EBI-11523526">
        <id>Q13554-3</id>
        <label>CAMK2B</label>
    </interactant>
    <organismsDiffer>false</organismsDiffer>
    <experiments>3</experiments>
</comment>
<comment type="interaction">
    <interactant intactId="EBI-5452779">
        <id>Q9BUI4</id>
    </interactant>
    <interactant intactId="EBI-744115">
        <id>Q9C0F1</id>
        <label>CEP44</label>
    </interactant>
    <organismsDiffer>false</organismsDiffer>
    <experiments>3</experiments>
</comment>
<comment type="interaction">
    <interactant intactId="EBI-5452779">
        <id>Q9BUI4</id>
    </interactant>
    <interactant intactId="EBI-11522539">
        <id>Q96MT8-3</id>
        <label>CEP63</label>
    </interactant>
    <organismsDiffer>false</organismsDiffer>
    <experiments>5</experiments>
</comment>
<comment type="interaction">
    <interactant intactId="EBI-5452779">
        <id>Q9BUI4</id>
    </interactant>
    <interactant intactId="EBI-945751">
        <id>P38432</id>
        <label>COIL</label>
    </interactant>
    <organismsDiffer>false</organismsDiffer>
    <experiments>3</experiments>
</comment>
<comment type="interaction">
    <interactant intactId="EBI-5452779">
        <id>Q9BUI4</id>
    </interactant>
    <interactant intactId="EBI-11988027">
        <id>Q9NRI5-2</id>
        <label>DISC1</label>
    </interactant>
    <organismsDiffer>false</organismsDiffer>
    <experiments>3</experiments>
</comment>
<comment type="interaction">
    <interactant intactId="EBI-5452779">
        <id>Q9BUI4</id>
    </interactant>
    <interactant intactId="EBI-744099">
        <id>Q9H0I2</id>
        <label>ENKD1</label>
    </interactant>
    <organismsDiffer>false</organismsDiffer>
    <experiments>3</experiments>
</comment>
<comment type="interaction">
    <interactant intactId="EBI-5452779">
        <id>Q9BUI4</id>
    </interactant>
    <interactant intactId="EBI-618309">
        <id>Q08379</id>
        <label>GOLGA2</label>
    </interactant>
    <organismsDiffer>false</organismsDiffer>
    <experiments>3</experiments>
</comment>
<comment type="interaction">
    <interactant intactId="EBI-5452779">
        <id>Q9BUI4</id>
    </interactant>
    <interactant intactId="EBI-2514791">
        <id>Q96CS2</id>
        <label>HAUS1</label>
    </interactant>
    <organismsDiffer>false</organismsDiffer>
    <experiments>3</experiments>
</comment>
<comment type="interaction">
    <interactant intactId="EBI-5452779">
        <id>Q9BUI4</id>
    </interactant>
    <interactant intactId="EBI-6509505">
        <id>Q0VD86</id>
        <label>INCA1</label>
    </interactant>
    <organismsDiffer>false</organismsDiffer>
    <experiments>3</experiments>
</comment>
<comment type="interaction">
    <interactant intactId="EBI-5452779">
        <id>Q9BUI4</id>
    </interactant>
    <interactant intactId="EBI-715394">
        <id>Q9H079</id>
        <label>KATNBL1</label>
    </interactant>
    <organismsDiffer>false</organismsDiffer>
    <experiments>3</experiments>
</comment>
<comment type="interaction">
    <interactant intactId="EBI-5452779">
        <id>Q9BUI4</id>
    </interactant>
    <interactant intactId="EBI-739493">
        <id>Q6ZU52</id>
        <label>KIAA0408</label>
    </interactant>
    <organismsDiffer>false</organismsDiffer>
    <experiments>4</experiments>
</comment>
<comment type="interaction">
    <interactant intactId="EBI-5452779">
        <id>Q9BUI4</id>
    </interactant>
    <interactant intactId="EBI-746999">
        <id>O95198</id>
        <label>KLHL2</label>
    </interactant>
    <organismsDiffer>false</organismsDiffer>
    <experiments>3</experiments>
</comment>
<comment type="interaction">
    <interactant intactId="EBI-5452779">
        <id>Q9BUI4</id>
    </interactant>
    <interactant intactId="EBI-358383">
        <id>P52294</id>
        <label>KPNA1</label>
    </interactant>
    <organismsDiffer>false</organismsDiffer>
    <experiments>4</experiments>
</comment>
<comment type="interaction">
    <interactant intactId="EBI-5452779">
        <id>Q9BUI4</id>
    </interactant>
    <interactant intactId="EBI-358297">
        <id>O00505</id>
        <label>KPNA3</label>
    </interactant>
    <organismsDiffer>false</organismsDiffer>
    <experiments>3</experiments>
</comment>
<comment type="interaction">
    <interactant intactId="EBI-5452779">
        <id>Q9BUI4</id>
    </interactant>
    <interactant intactId="EBI-540602">
        <id>O15131</id>
        <label>KPNA5</label>
    </interactant>
    <organismsDiffer>false</organismsDiffer>
    <experiments>5</experiments>
</comment>
<comment type="interaction">
    <interactant intactId="EBI-5452779">
        <id>Q9BUI4</id>
    </interactant>
    <interactant intactId="EBI-359923">
        <id>O60684</id>
        <label>KPNA6</label>
    </interactant>
    <organismsDiffer>false</organismsDiffer>
    <experiments>5</experiments>
</comment>
<comment type="interaction">
    <interactant intactId="EBI-5452779">
        <id>Q9BUI4</id>
    </interactant>
    <interactant intactId="EBI-2949715">
        <id>O95678</id>
        <label>KRT75</label>
    </interactant>
    <organismsDiffer>false</organismsDiffer>
    <experiments>3</experiments>
</comment>
<comment type="interaction">
    <interactant intactId="EBI-5452779">
        <id>Q9BUI4</id>
    </interactant>
    <interactant intactId="EBI-1216080">
        <id>Q9Y250</id>
        <label>LZTS1</label>
    </interactant>
    <organismsDiffer>false</organismsDiffer>
    <experiments>3</experiments>
</comment>
<comment type="interaction">
    <interactant intactId="EBI-5452779">
        <id>Q9BUI4</id>
    </interactant>
    <interactant intactId="EBI-10963850">
        <id>Q9NZQ3-3</id>
        <label>NCKIPSD</label>
    </interactant>
    <organismsDiffer>false</organismsDiffer>
    <experiments>3</experiments>
</comment>
<comment type="interaction">
    <interactant intactId="EBI-5452779">
        <id>Q9BUI4</id>
    </interactant>
    <interactant intactId="EBI-747278">
        <id>P26367</id>
        <label>PAX6</label>
    </interactant>
    <organismsDiffer>false</organismsDiffer>
    <experiments>3</experiments>
</comment>
<comment type="interaction">
    <interactant intactId="EBI-5452779">
        <id>Q9BUI4</id>
    </interactant>
    <interactant intactId="EBI-79165">
        <id>Q9NRD5</id>
        <label>PICK1</label>
    </interactant>
    <organismsDiffer>false</organismsDiffer>
    <experiments>3</experiments>
</comment>
<comment type="interaction">
    <interactant intactId="EBI-5452779">
        <id>Q9BUI4</id>
    </interactant>
    <interactant intactId="EBI-10171633">
        <id>Q96PV4</id>
        <label>PNMA5</label>
    </interactant>
    <organismsDiffer>false</organismsDiffer>
    <experiments>3</experiments>
</comment>
<comment type="interaction">
    <interactant intactId="EBI-5452779">
        <id>Q9BUI4</id>
    </interactant>
    <interactant intactId="EBI-710067">
        <id>Q9H1D9</id>
        <label>POLR3F</label>
    </interactant>
    <organismsDiffer>false</organismsDiffer>
    <experiments>4</experiments>
</comment>
<comment type="interaction">
    <interactant intactId="EBI-5452779">
        <id>Q9BUI4</id>
    </interactant>
    <interactant intactId="EBI-12362221">
        <id>O15318</id>
        <label>POLR3G</label>
    </interactant>
    <organismsDiffer>false</organismsDiffer>
    <experiments>9</experiments>
</comment>
<comment type="interaction">
    <interactant intactId="EBI-5452779">
        <id>Q9BUI4</id>
    </interactant>
    <interactant intactId="EBI-2855862">
        <id>Q9BT43</id>
        <label>POLR3GL</label>
    </interactant>
    <organismsDiffer>false</organismsDiffer>
    <experiments>10</experiments>
</comment>
<comment type="interaction">
    <interactant intactId="EBI-5452779">
        <id>Q9BUI4</id>
    </interactant>
    <interactant intactId="EBI-12029004">
        <id>P78424</id>
        <label>POU6F2</label>
    </interactant>
    <organismsDiffer>false</organismsDiffer>
    <experiments>3</experiments>
</comment>
<comment type="interaction">
    <interactant intactId="EBI-5452779">
        <id>Q9BUI4</id>
    </interactant>
    <interactant intactId="EBI-11322432">
        <id>Q8NC74</id>
        <label>RBBP8NL</label>
    </interactant>
    <organismsDiffer>false</organismsDiffer>
    <experiments>3</experiments>
</comment>
<comment type="interaction">
    <interactant intactId="EBI-5452779">
        <id>Q9BUI4</id>
    </interactant>
    <interactant intactId="EBI-876651">
        <id>Q13464</id>
        <label>ROCK1</label>
    </interactant>
    <organismsDiffer>false</organismsDiffer>
    <experiments>3</experiments>
</comment>
<comment type="interaction">
    <interactant intactId="EBI-5452779">
        <id>Q9BUI4</id>
    </interactant>
    <interactant intactId="EBI-1378139">
        <id>Q9HAT0</id>
        <label>ROPN1</label>
    </interactant>
    <organismsDiffer>false</organismsDiffer>
    <experiments>3</experiments>
</comment>
<comment type="interaction">
    <interactant intactId="EBI-5452779">
        <id>Q9BUI4</id>
    </interactant>
    <interactant intactId="EBI-6589365">
        <id>P23497-2</id>
        <label>SP100</label>
    </interactant>
    <organismsDiffer>false</organismsDiffer>
    <experiments>3</experiments>
</comment>
<comment type="interaction">
    <interactant intactId="EBI-5452779">
        <id>Q9BUI4</id>
    </interactant>
    <interactant intactId="EBI-10182881">
        <id>A1L306</id>
        <label>TNR</label>
    </interactant>
    <organismsDiffer>false</organismsDiffer>
    <experiments>3</experiments>
</comment>
<comment type="interaction">
    <interactant intactId="EBI-5452779">
        <id>Q9BUI4</id>
    </interactant>
    <interactant intactId="EBI-355744">
        <id>Q12933</id>
        <label>TRAF2</label>
    </interactant>
    <organismsDiffer>false</organismsDiffer>
    <experiments>3</experiments>
</comment>
<comment type="interaction">
    <interactant intactId="EBI-5452779">
        <id>Q9BUI4</id>
    </interactant>
    <interactant intactId="EBI-719493">
        <id>P14373</id>
        <label>TRIM27</label>
    </interactant>
    <organismsDiffer>false</organismsDiffer>
    <experiments>6</experiments>
</comment>
<comment type="interaction">
    <interactant intactId="EBI-5452779">
        <id>Q9BUI4</id>
    </interactant>
    <interactant intactId="EBI-11530712">
        <id>Q04323-2</id>
        <label>UBXN1</label>
    </interactant>
    <organismsDiffer>false</organismsDiffer>
    <experiments>3</experiments>
</comment>
<comment type="interaction">
    <interactant intactId="EBI-5452779">
        <id>Q9BUI4</id>
    </interactant>
    <interactant intactId="EBI-12227803">
        <id>Q5SQQ9-2</id>
        <label>VAX1</label>
    </interactant>
    <organismsDiffer>false</organismsDiffer>
    <experiments>3</experiments>
</comment>
<comment type="interaction">
    <interactant intactId="EBI-5452779">
        <id>Q9BUI4</id>
    </interactant>
    <interactant intactId="EBI-12894399">
        <id>Q9H8Y1</id>
        <label>VRTN</label>
    </interactant>
    <organismsDiffer>false</organismsDiffer>
    <experiments>3</experiments>
</comment>
<comment type="subcellular location">
    <subcellularLocation>
        <location evidence="12">Nucleus</location>
    </subcellularLocation>
</comment>
<comment type="miscellaneous">
    <text>Antibodies against POLR3C have been found in the sera of patients with systemic sclerosis (SSc).</text>
</comment>
<comment type="similarity">
    <text evidence="19">Belongs to the eukaryotic RPC3/POLR3C RNA polymerase subunit family.</text>
</comment>
<protein>
    <recommendedName>
        <fullName>DNA-directed RNA polymerase III subunit RPC3</fullName>
        <shortName>RNA polymerase III subunit C3</shortName>
    </recommendedName>
    <alternativeName>
        <fullName>DNA-directed RNA polymerase III subunit C</fullName>
    </alternativeName>
    <alternativeName>
        <fullName>RNA polymerase III 62 kDa subunit</fullName>
        <shortName>RPC62</shortName>
    </alternativeName>
</protein>
<evidence type="ECO:0000250" key="1"/>
<evidence type="ECO:0000256" key="2">
    <source>
        <dbReference type="SAM" id="MobiDB-lite"/>
    </source>
</evidence>
<evidence type="ECO:0000269" key="3">
    <source>
    </source>
</evidence>
<evidence type="ECO:0000269" key="4">
    <source>
    </source>
</evidence>
<evidence type="ECO:0000269" key="5">
    <source>
    </source>
</evidence>
<evidence type="ECO:0000269" key="6">
    <source>
    </source>
</evidence>
<evidence type="ECO:0000269" key="7">
    <source>
    </source>
</evidence>
<evidence type="ECO:0000269" key="8">
    <source>
    </source>
</evidence>
<evidence type="ECO:0000269" key="9">
    <source>
    </source>
</evidence>
<evidence type="ECO:0000269" key="10">
    <source>
    </source>
</evidence>
<evidence type="ECO:0000269" key="11">
    <source>
    </source>
</evidence>
<evidence type="ECO:0000269" key="12">
    <source>
    </source>
</evidence>
<evidence type="ECO:0000269" key="13">
    <source>
    </source>
</evidence>
<evidence type="ECO:0000269" key="14">
    <source>
    </source>
</evidence>
<evidence type="ECO:0000269" key="15">
    <source>
    </source>
</evidence>
<evidence type="ECO:0000269" key="16">
    <source>
    </source>
</evidence>
<evidence type="ECO:0000269" key="17">
    <source>
    </source>
</evidence>
<evidence type="ECO:0000269" key="18">
    <source>
    </source>
</evidence>
<evidence type="ECO:0000305" key="19"/>
<evidence type="ECO:0000312" key="20">
    <source>
        <dbReference type="HGNC" id="HGNC:30076"/>
    </source>
</evidence>
<evidence type="ECO:0007744" key="21">
    <source>
    </source>
</evidence>
<evidence type="ECO:0007829" key="22">
    <source>
        <dbReference type="PDB" id="2XUB"/>
    </source>
</evidence>
<evidence type="ECO:0007829" key="23">
    <source>
        <dbReference type="PDB" id="7AE1"/>
    </source>
</evidence>
<evidence type="ECO:0007829" key="24">
    <source>
        <dbReference type="PDB" id="7AE3"/>
    </source>
</evidence>
<evidence type="ECO:0007829" key="25">
    <source>
        <dbReference type="PDB" id="7D58"/>
    </source>
</evidence>
<evidence type="ECO:0007829" key="26">
    <source>
        <dbReference type="PDB" id="7D59"/>
    </source>
</evidence>
<evidence type="ECO:0007829" key="27">
    <source>
        <dbReference type="PDB" id="7DU2"/>
    </source>
</evidence>
<gene>
    <name evidence="20" type="primary">POLR3C</name>
</gene>
<accession>Q9BUI4</accession>
<accession>O15317</accession>
<accession>Q9Y3R6</accession>
<proteinExistence type="evidence at protein level"/>
<feature type="chain" id="PRO_0000073963" description="DNA-directed RNA polymerase III subunit RPC3">
    <location>
        <begin position="1"/>
        <end position="534"/>
    </location>
</feature>
<feature type="region of interest" description="Disordered" evidence="2">
    <location>
        <begin position="161"/>
        <end position="181"/>
    </location>
</feature>
<feature type="region of interest" description="Disordered" evidence="2">
    <location>
        <begin position="197"/>
        <end position="228"/>
    </location>
</feature>
<feature type="compositionally biased region" description="Basic and acidic residues" evidence="2">
    <location>
        <begin position="211"/>
        <end position="228"/>
    </location>
</feature>
<feature type="modified residue" description="Phosphoserine" evidence="21">
    <location>
        <position position="194"/>
    </location>
</feature>
<feature type="sequence variant" id="VAR_019083" description="In dbSNP:rs1044697." evidence="18">
    <original>H</original>
    <variation>R</variation>
    <location>
        <position position="243"/>
    </location>
</feature>
<feature type="mutagenesis site" description="Strongly decreased ssDNA-binding. No effect on interaction with POLR3F, POLR3G, nor with POLR3GL." evidence="9">
    <original>KK</original>
    <variation>EE</variation>
    <location>
        <begin position="51"/>
        <end position="52"/>
    </location>
</feature>
<feature type="mutagenesis site" description="Loss of interaction with POLR3G and POLR3GL. No effect on interaction with POLR3F." evidence="9">
    <original>L</original>
    <variation>K</variation>
    <location>
        <position position="312"/>
    </location>
</feature>
<feature type="mutagenesis site" description="Strongly decreased ssDNA-binding. No effect on interaction with POLR3F, POLR3G, nor with POLR3GL." evidence="9">
    <original>R</original>
    <variation>E</variation>
    <location>
        <position position="357"/>
    </location>
</feature>
<feature type="mutagenesis site" description="Strongly decreased ssDNA-binding. No effect on interaction with POLR3F, POLR3G, nor with POLR3GL." evidence="9">
    <original>RIFR</original>
    <variation>EIFE</variation>
    <location>
        <begin position="364"/>
        <end position="367"/>
    </location>
</feature>
<feature type="mutagenesis site" description="Strongly decreased ssDNA-binding. No effect on interaction with POLR3F, POLR3G, nor with POLR3GL." evidence="9">
    <original>K</original>
    <variation>E</variation>
    <location>
        <position position="389"/>
    </location>
</feature>
<feature type="mutagenesis site" description="Strongly decreased ssDNA-binding. No effect on interaction with POLR3F, POLR3G, nor with POLR3GL." evidence="9">
    <original>NLIER</original>
    <variation>ALIEE</variation>
    <location>
        <begin position="445"/>
        <end position="449"/>
    </location>
</feature>
<feature type="mutagenesis site" description="Mild decrease in ssDNA-binding. No effect on interaction with POLR3F, POLR3G, nor with POLR3GL." evidence="9">
    <original>RVEAI</original>
    <variation>EVEAF</variation>
    <location>
        <begin position="466"/>
        <end position="470"/>
    </location>
</feature>
<feature type="sequence conflict" description="In Ref. 1; AAB63675." evidence="19" ref="1">
    <original>ML</original>
    <variation>IV</variation>
    <location>
        <begin position="85"/>
        <end position="86"/>
    </location>
</feature>
<feature type="sequence conflict" description="In Ref. 1; AAB63675." evidence="19" ref="1">
    <original>SA</original>
    <variation>CT</variation>
    <location>
        <begin position="119"/>
        <end position="120"/>
    </location>
</feature>
<feature type="sequence conflict" description="In Ref. 1; AAB63675." evidence="19" ref="1">
    <original>KRPKYTTDNKEPIPDDGIYWQA</original>
    <variation>RDQNILQITRXPFQMMGFIGRP</variation>
    <location>
        <begin position="216"/>
        <end position="237"/>
    </location>
</feature>
<feature type="sequence conflict" description="In Ref. 1; AAB63675." evidence="19" ref="1">
    <original>S</original>
    <variation>F</variation>
    <location>
        <position position="289"/>
    </location>
</feature>
<feature type="sequence conflict" description="In Ref. 1; AAB63675." evidence="19" ref="1">
    <original>A</original>
    <variation>R</variation>
    <location>
        <position position="343"/>
    </location>
</feature>
<feature type="sequence conflict" description="In Ref. 1; AAB63675." evidence="19" ref="1">
    <original>F</original>
    <variation>C</variation>
    <location>
        <position position="366"/>
    </location>
</feature>
<feature type="sequence conflict" description="In Ref. 1; AAB63675." evidence="19" ref="1">
    <original>PAK</original>
    <variation>LQ</variation>
    <location>
        <begin position="387"/>
        <end position="389"/>
    </location>
</feature>
<feature type="sequence conflict" description="In Ref. 1; AAB63675." evidence="19" ref="1">
    <original>E</original>
    <variation>G</variation>
    <location>
        <position position="401"/>
    </location>
</feature>
<feature type="sequence conflict" description="In Ref. 1; AAB63675." evidence="19" ref="1">
    <original>LH</original>
    <variation>FD</variation>
    <location>
        <begin position="436"/>
        <end position="437"/>
    </location>
</feature>
<feature type="sequence conflict" description="In Ref. 3; CAB41919." evidence="19" ref="3">
    <original>D</original>
    <variation>E</variation>
    <location>
        <position position="517"/>
    </location>
</feature>
<feature type="helix" evidence="22">
    <location>
        <begin position="3"/>
        <end position="31"/>
    </location>
</feature>
<feature type="strand" evidence="22">
    <location>
        <begin position="33"/>
        <end position="35"/>
    </location>
</feature>
<feature type="helix" evidence="22">
    <location>
        <begin position="36"/>
        <end position="43"/>
    </location>
</feature>
<feature type="helix" evidence="22">
    <location>
        <begin position="47"/>
        <end position="59"/>
    </location>
</feature>
<feature type="strand" evidence="22">
    <location>
        <begin position="62"/>
        <end position="68"/>
    </location>
</feature>
<feature type="turn" evidence="22">
    <location>
        <begin position="69"/>
        <end position="71"/>
    </location>
</feature>
<feature type="strand" evidence="22">
    <location>
        <begin position="72"/>
        <end position="77"/>
    </location>
</feature>
<feature type="helix" evidence="22">
    <location>
        <begin position="79"/>
        <end position="83"/>
    </location>
</feature>
<feature type="helix" evidence="22">
    <location>
        <begin position="84"/>
        <end position="87"/>
    </location>
</feature>
<feature type="helix" evidence="22">
    <location>
        <begin position="88"/>
        <end position="113"/>
    </location>
</feature>
<feature type="strand" evidence="25">
    <location>
        <begin position="114"/>
        <end position="116"/>
    </location>
</feature>
<feature type="helix" evidence="22">
    <location>
        <begin position="118"/>
        <end position="131"/>
    </location>
</feature>
<feature type="strand" evidence="22">
    <location>
        <begin position="133"/>
        <end position="136"/>
    </location>
</feature>
<feature type="helix" evidence="22">
    <location>
        <begin position="141"/>
        <end position="153"/>
    </location>
</feature>
<feature type="strand" evidence="22">
    <location>
        <begin position="156"/>
        <end position="159"/>
    </location>
</feature>
<feature type="turn" evidence="23">
    <location>
        <begin position="166"/>
        <end position="168"/>
    </location>
</feature>
<feature type="strand" evidence="27">
    <location>
        <begin position="171"/>
        <end position="175"/>
    </location>
</feature>
<feature type="strand" evidence="23">
    <location>
        <begin position="184"/>
        <end position="186"/>
    </location>
</feature>
<feature type="turn" evidence="23">
    <location>
        <begin position="229"/>
        <end position="232"/>
    </location>
</feature>
<feature type="strand" evidence="22">
    <location>
        <begin position="234"/>
        <end position="237"/>
    </location>
</feature>
<feature type="helix" evidence="22">
    <location>
        <begin position="239"/>
        <end position="258"/>
    </location>
</feature>
<feature type="helix" evidence="22">
    <location>
        <begin position="261"/>
        <end position="272"/>
    </location>
</feature>
<feature type="turn" evidence="22">
    <location>
        <begin position="273"/>
        <end position="277"/>
    </location>
</feature>
<feature type="helix" evidence="22">
    <location>
        <begin position="290"/>
        <end position="295"/>
    </location>
</feature>
<feature type="helix" evidence="22">
    <location>
        <begin position="305"/>
        <end position="316"/>
    </location>
</feature>
<feature type="strand" evidence="27">
    <location>
        <begin position="317"/>
        <end position="319"/>
    </location>
</feature>
<feature type="strand" evidence="22">
    <location>
        <begin position="323"/>
        <end position="325"/>
    </location>
</feature>
<feature type="strand" evidence="23">
    <location>
        <begin position="329"/>
        <end position="331"/>
    </location>
</feature>
<feature type="strand" evidence="22">
    <location>
        <begin position="333"/>
        <end position="337"/>
    </location>
</feature>
<feature type="helix" evidence="22">
    <location>
        <begin position="338"/>
        <end position="358"/>
    </location>
</feature>
<feature type="helix" evidence="22">
    <location>
        <begin position="360"/>
        <end position="371"/>
    </location>
</feature>
<feature type="strand" evidence="23">
    <location>
        <begin position="372"/>
        <end position="375"/>
    </location>
</feature>
<feature type="helix" evidence="22">
    <location>
        <begin position="377"/>
        <end position="384"/>
    </location>
</feature>
<feature type="helix" evidence="22">
    <location>
        <begin position="388"/>
        <end position="400"/>
    </location>
</feature>
<feature type="strand" evidence="23">
    <location>
        <begin position="403"/>
        <end position="406"/>
    </location>
</feature>
<feature type="strand" evidence="23">
    <location>
        <begin position="409"/>
        <end position="412"/>
    </location>
</feature>
<feature type="helix" evidence="23">
    <location>
        <begin position="417"/>
        <end position="419"/>
    </location>
</feature>
<feature type="strand" evidence="26">
    <location>
        <begin position="421"/>
        <end position="425"/>
    </location>
</feature>
<feature type="helix" evidence="22">
    <location>
        <begin position="428"/>
        <end position="456"/>
    </location>
</feature>
<feature type="helix" evidence="22">
    <location>
        <begin position="458"/>
        <end position="472"/>
    </location>
</feature>
<feature type="strand" evidence="24">
    <location>
        <begin position="473"/>
        <end position="476"/>
    </location>
</feature>
<feature type="helix" evidence="23">
    <location>
        <begin position="481"/>
        <end position="483"/>
    </location>
</feature>
<feature type="helix" evidence="22">
    <location>
        <begin position="485"/>
        <end position="488"/>
    </location>
</feature>
<feature type="helix" evidence="22">
    <location>
        <begin position="493"/>
        <end position="529"/>
    </location>
</feature>
<sequence>MTQAEIKLCSLLLQEHFGEIVEKIGVHLIRTGSQPLRVIAHDTGTSLDQVKKALCVLVQHNLVSYQVHKRGVVEYEAQCSRVLRMLRYPRYIYTTKTLYSDTGELIVEELLLNGKLTMSAVVKKVADRLTETMEDGKTMDYAEVSNTFVRLADTHFVQRCPSVPTTENSDPGPPPPAPTLVINEKDMYLVPKLSLIGKGKRRRSSDEDAAGEPKAKRPKYTTDNKEPIPDDGIYWQANLDRFHQHFRDQAIVSAVANRMDQTSSEIVRTMLRMSEITTSSSAPFTQPLSSNEIFRSLPVGYNISKQVLDQYLTLLADDPLEFVGKSGDSGGGMYVINLHKALASLATATLESVVQERFGSRCARIFRLVLQKKHIEQKQVEDFAMIPAKEAKDMLYKMLSENFMSLQEIPKTPDHAPSRTFYLYTVNILSAARMLLHRCYKSIANLIERRQFETKENKRLLEKSQRVEAIIASMQATGAEEAQLQEIEEMITAPERQQLETLKRNVNKLDASEIQVDETIFLLESYIECTMKRQ</sequence>
<dbReference type="EMBL" id="U93867">
    <property type="protein sequence ID" value="AAB63675.1"/>
    <property type="molecule type" value="mRNA"/>
</dbReference>
<dbReference type="EMBL" id="AY091463">
    <property type="protein sequence ID" value="AAM12033.1"/>
    <property type="molecule type" value="mRNA"/>
</dbReference>
<dbReference type="EMBL" id="AJ238221">
    <property type="protein sequence ID" value="CAB41919.1"/>
    <property type="molecule type" value="Genomic_DNA"/>
</dbReference>
<dbReference type="EMBL" id="AJ238222">
    <property type="protein sequence ID" value="CAB41919.1"/>
    <property type="status" value="JOINED"/>
    <property type="molecule type" value="Genomic_DNA"/>
</dbReference>
<dbReference type="EMBL" id="AJ238223">
    <property type="protein sequence ID" value="CAB41919.1"/>
    <property type="status" value="JOINED"/>
    <property type="molecule type" value="Genomic_DNA"/>
</dbReference>
<dbReference type="EMBL" id="AJ238224">
    <property type="protein sequence ID" value="CAB41919.1"/>
    <property type="status" value="JOINED"/>
    <property type="molecule type" value="Genomic_DNA"/>
</dbReference>
<dbReference type="EMBL" id="AJ238225">
    <property type="protein sequence ID" value="CAB41919.1"/>
    <property type="status" value="JOINED"/>
    <property type="molecule type" value="Genomic_DNA"/>
</dbReference>
<dbReference type="EMBL" id="AJ238226">
    <property type="protein sequence ID" value="CAB41919.1"/>
    <property type="status" value="JOINED"/>
    <property type="molecule type" value="Genomic_DNA"/>
</dbReference>
<dbReference type="EMBL" id="AJ238227">
    <property type="protein sequence ID" value="CAB41919.1"/>
    <property type="status" value="JOINED"/>
    <property type="molecule type" value="Genomic_DNA"/>
</dbReference>
<dbReference type="EMBL" id="AJ238228">
    <property type="protein sequence ID" value="CAB41919.1"/>
    <property type="status" value="JOINED"/>
    <property type="molecule type" value="Genomic_DNA"/>
</dbReference>
<dbReference type="EMBL" id="AJ238229">
    <property type="protein sequence ID" value="CAB41919.1"/>
    <property type="status" value="JOINED"/>
    <property type="molecule type" value="Genomic_DNA"/>
</dbReference>
<dbReference type="EMBL" id="AJ238230">
    <property type="protein sequence ID" value="CAB41919.1"/>
    <property type="status" value="JOINED"/>
    <property type="molecule type" value="Genomic_DNA"/>
</dbReference>
<dbReference type="EMBL" id="AJ238231">
    <property type="protein sequence ID" value="CAB41919.1"/>
    <property type="status" value="JOINED"/>
    <property type="molecule type" value="Genomic_DNA"/>
</dbReference>
<dbReference type="EMBL" id="AJ238232">
    <property type="protein sequence ID" value="CAB41919.1"/>
    <property type="status" value="JOINED"/>
    <property type="molecule type" value="Genomic_DNA"/>
</dbReference>
<dbReference type="EMBL" id="AJ238233">
    <property type="protein sequence ID" value="CAB41919.1"/>
    <property type="status" value="JOINED"/>
    <property type="molecule type" value="Genomic_DNA"/>
</dbReference>
<dbReference type="EMBL" id="AJ238234">
    <property type="protein sequence ID" value="CAB41919.1"/>
    <property type="status" value="JOINED"/>
    <property type="molecule type" value="Genomic_DNA"/>
</dbReference>
<dbReference type="EMBL" id="BC002586">
    <property type="protein sequence ID" value="AAH02586.1"/>
    <property type="molecule type" value="mRNA"/>
</dbReference>
<dbReference type="CCDS" id="CCDS72864.1"/>
<dbReference type="RefSeq" id="NP_001290385.1">
    <property type="nucleotide sequence ID" value="NM_001303456.1"/>
</dbReference>
<dbReference type="RefSeq" id="NP_006459.3">
    <property type="nucleotide sequence ID" value="NM_006468.7"/>
</dbReference>
<dbReference type="PDB" id="2XUB">
    <property type="method" value="X-ray"/>
    <property type="resolution" value="2.80 A"/>
    <property type="chains" value="A=1-534"/>
</dbReference>
<dbReference type="PDB" id="2XV4">
    <property type="method" value="X-ray"/>
    <property type="resolution" value="2.95 A"/>
    <property type="chains" value="S=1-534"/>
</dbReference>
<dbReference type="PDB" id="5AFQ">
    <property type="method" value="X-ray"/>
    <property type="resolution" value="7.00 A"/>
    <property type="chains" value="A/B=1-534"/>
</dbReference>
<dbReference type="PDB" id="7A6H">
    <property type="method" value="EM"/>
    <property type="resolution" value="3.30 A"/>
    <property type="chains" value="O=1-534"/>
</dbReference>
<dbReference type="PDB" id="7AE1">
    <property type="method" value="EM"/>
    <property type="resolution" value="2.80 A"/>
    <property type="chains" value="O=1-534"/>
</dbReference>
<dbReference type="PDB" id="7AE3">
    <property type="method" value="EM"/>
    <property type="resolution" value="3.10 A"/>
    <property type="chains" value="O=1-534"/>
</dbReference>
<dbReference type="PDB" id="7AEA">
    <property type="method" value="EM"/>
    <property type="resolution" value="3.40 A"/>
    <property type="chains" value="O=1-534"/>
</dbReference>
<dbReference type="PDB" id="7AST">
    <property type="method" value="EM"/>
    <property type="resolution" value="4.00 A"/>
    <property type="chains" value="X=1-534"/>
</dbReference>
<dbReference type="PDB" id="7D58">
    <property type="method" value="EM"/>
    <property type="resolution" value="2.90 A"/>
    <property type="chains" value="O=1-534"/>
</dbReference>
<dbReference type="PDB" id="7D59">
    <property type="method" value="EM"/>
    <property type="resolution" value="3.10 A"/>
    <property type="chains" value="O=1-534"/>
</dbReference>
<dbReference type="PDB" id="7DN3">
    <property type="method" value="EM"/>
    <property type="resolution" value="3.50 A"/>
    <property type="chains" value="O=1-534"/>
</dbReference>
<dbReference type="PDB" id="7DU2">
    <property type="method" value="EM"/>
    <property type="resolution" value="3.35 A"/>
    <property type="chains" value="O=1-534"/>
</dbReference>
<dbReference type="PDB" id="7FJI">
    <property type="method" value="EM"/>
    <property type="resolution" value="3.60 A"/>
    <property type="chains" value="O=1-534"/>
</dbReference>
<dbReference type="PDB" id="7FJJ">
    <property type="method" value="EM"/>
    <property type="resolution" value="3.60 A"/>
    <property type="chains" value="O=1-534"/>
</dbReference>
<dbReference type="PDB" id="8ITY">
    <property type="method" value="EM"/>
    <property type="resolution" value="3.90 A"/>
    <property type="chains" value="O=1-534"/>
</dbReference>
<dbReference type="PDB" id="8IUE">
    <property type="method" value="EM"/>
    <property type="resolution" value="4.10 A"/>
    <property type="chains" value="O=1-534"/>
</dbReference>
<dbReference type="PDB" id="8IUH">
    <property type="method" value="EM"/>
    <property type="resolution" value="3.40 A"/>
    <property type="chains" value="O=1-534"/>
</dbReference>
<dbReference type="PDB" id="9FSO">
    <property type="method" value="EM"/>
    <property type="resolution" value="3.28 A"/>
    <property type="chains" value="C=1-534"/>
</dbReference>
<dbReference type="PDB" id="9FSP">
    <property type="method" value="EM"/>
    <property type="resolution" value="3.39 A"/>
    <property type="chains" value="C=1-534"/>
</dbReference>
<dbReference type="PDB" id="9FSQ">
    <property type="method" value="EM"/>
    <property type="resolution" value="3.51 A"/>
    <property type="chains" value="C=1-534"/>
</dbReference>
<dbReference type="PDB" id="9FSR">
    <property type="method" value="EM"/>
    <property type="resolution" value="3.76 A"/>
    <property type="chains" value="C=1-534"/>
</dbReference>
<dbReference type="PDB" id="9FSS">
    <property type="method" value="EM"/>
    <property type="resolution" value="4.14 A"/>
    <property type="chains" value="C=1-534"/>
</dbReference>
<dbReference type="PDBsum" id="2XUB"/>
<dbReference type="PDBsum" id="2XV4"/>
<dbReference type="PDBsum" id="5AFQ"/>
<dbReference type="PDBsum" id="7A6H"/>
<dbReference type="PDBsum" id="7AE1"/>
<dbReference type="PDBsum" id="7AE3"/>
<dbReference type="PDBsum" id="7AEA"/>
<dbReference type="PDBsum" id="7AST"/>
<dbReference type="PDBsum" id="7D58"/>
<dbReference type="PDBsum" id="7D59"/>
<dbReference type="PDBsum" id="7DN3"/>
<dbReference type="PDBsum" id="7DU2"/>
<dbReference type="PDBsum" id="7FJI"/>
<dbReference type="PDBsum" id="7FJJ"/>
<dbReference type="PDBsum" id="8ITY"/>
<dbReference type="PDBsum" id="8IUE"/>
<dbReference type="PDBsum" id="8IUH"/>
<dbReference type="PDBsum" id="9FSO"/>
<dbReference type="PDBsum" id="9FSP"/>
<dbReference type="PDBsum" id="9FSQ"/>
<dbReference type="PDBsum" id="9FSR"/>
<dbReference type="PDBsum" id="9FSS"/>
<dbReference type="EMDB" id="EMD-11673"/>
<dbReference type="EMDB" id="EMD-11736"/>
<dbReference type="EMDB" id="EMD-11738"/>
<dbReference type="EMDB" id="EMD-11742"/>
<dbReference type="EMDB" id="EMD-11904"/>
<dbReference type="EMDB" id="EMD-30577"/>
<dbReference type="EMDB" id="EMD-30578"/>
<dbReference type="EMDB" id="EMD-30779"/>
<dbReference type="EMDB" id="EMD-30865"/>
<dbReference type="EMDB" id="EMD-31621"/>
<dbReference type="EMDB" id="EMD-31622"/>
<dbReference type="EMDB" id="EMD-35712"/>
<dbReference type="EMDB" id="EMD-35719"/>
<dbReference type="EMDB" id="EMD-35722"/>
<dbReference type="EMDB" id="EMD-50730"/>
<dbReference type="EMDB" id="EMD-50731"/>
<dbReference type="EMDB" id="EMD-50732"/>
<dbReference type="EMDB" id="EMD-50733"/>
<dbReference type="EMDB" id="EMD-50734"/>
<dbReference type="SMR" id="Q9BUI4"/>
<dbReference type="BioGRID" id="115868">
    <property type="interactions" value="115"/>
</dbReference>
<dbReference type="ComplexPortal" id="CPX-2393">
    <property type="entry name" value="DNA-directed RNA polymerase III complex, POLR3G variant"/>
</dbReference>
<dbReference type="ComplexPortal" id="CPX-7482">
    <property type="entry name" value="DNA-directed RNA polymerase III complex, POLR3GL variant"/>
</dbReference>
<dbReference type="CORUM" id="Q9BUI4"/>
<dbReference type="DIP" id="DIP-59078N"/>
<dbReference type="FunCoup" id="Q9BUI4">
    <property type="interactions" value="4001"/>
</dbReference>
<dbReference type="IntAct" id="Q9BUI4">
    <property type="interactions" value="67"/>
</dbReference>
<dbReference type="STRING" id="9606.ENSP00000334564"/>
<dbReference type="GlyGen" id="Q9BUI4">
    <property type="glycosylation" value="1 site, 1 O-linked glycan (1 site)"/>
</dbReference>
<dbReference type="iPTMnet" id="Q9BUI4"/>
<dbReference type="MetOSite" id="Q9BUI4"/>
<dbReference type="PhosphoSitePlus" id="Q9BUI4"/>
<dbReference type="SwissPalm" id="Q9BUI4"/>
<dbReference type="BioMuta" id="POLR3C"/>
<dbReference type="DMDM" id="60393871"/>
<dbReference type="jPOST" id="Q9BUI4"/>
<dbReference type="MassIVE" id="Q9BUI4"/>
<dbReference type="PaxDb" id="9606-ENSP00000334564"/>
<dbReference type="PeptideAtlas" id="Q9BUI4"/>
<dbReference type="ProteomicsDB" id="79088"/>
<dbReference type="Pumba" id="Q9BUI4"/>
<dbReference type="Antibodypedia" id="33966">
    <property type="antibodies" value="251 antibodies from 24 providers"/>
</dbReference>
<dbReference type="DNASU" id="10623"/>
<dbReference type="Ensembl" id="ENST00000334163.4">
    <property type="protein sequence ID" value="ENSP00000334564.3"/>
    <property type="gene ID" value="ENSG00000186141.10"/>
</dbReference>
<dbReference type="Ensembl" id="ENST00000698751.1">
    <property type="protein sequence ID" value="ENSP00000513913.1"/>
    <property type="gene ID" value="ENSG00000186141.10"/>
</dbReference>
<dbReference type="GeneID" id="10623"/>
<dbReference type="KEGG" id="hsa:10623"/>
<dbReference type="MANE-Select" id="ENST00000334163.4">
    <property type="protein sequence ID" value="ENSP00000334564.3"/>
    <property type="RefSeq nucleotide sequence ID" value="NM_006468.8"/>
    <property type="RefSeq protein sequence ID" value="NP_006459.3"/>
</dbReference>
<dbReference type="UCSC" id="uc001eoh.3">
    <property type="organism name" value="human"/>
</dbReference>
<dbReference type="AGR" id="HGNC:30076"/>
<dbReference type="CTD" id="10623"/>
<dbReference type="DisGeNET" id="10623"/>
<dbReference type="GeneCards" id="POLR3C"/>
<dbReference type="HGNC" id="HGNC:30076">
    <property type="gene designation" value="POLR3C"/>
</dbReference>
<dbReference type="HPA" id="ENSG00000186141">
    <property type="expression patterns" value="Low tissue specificity"/>
</dbReference>
<dbReference type="MalaCards" id="POLR3C"/>
<dbReference type="MIM" id="617454">
    <property type="type" value="gene"/>
</dbReference>
<dbReference type="neXtProt" id="NX_Q9BUI4"/>
<dbReference type="OpenTargets" id="ENSG00000186141"/>
<dbReference type="PharmGKB" id="PA134870963"/>
<dbReference type="VEuPathDB" id="HostDB:ENSG00000186141"/>
<dbReference type="eggNOG" id="KOG2587">
    <property type="taxonomic scope" value="Eukaryota"/>
</dbReference>
<dbReference type="GeneTree" id="ENSGT00390000002799"/>
<dbReference type="HOGENOM" id="CLU_023294_1_1_1"/>
<dbReference type="InParanoid" id="Q9BUI4"/>
<dbReference type="OMA" id="GQYVVHM"/>
<dbReference type="OrthoDB" id="272392at2759"/>
<dbReference type="PAN-GO" id="Q9BUI4">
    <property type="GO annotations" value="1 GO annotation based on evolutionary models"/>
</dbReference>
<dbReference type="PhylomeDB" id="Q9BUI4"/>
<dbReference type="TreeFam" id="TF103048"/>
<dbReference type="PathwayCommons" id="Q9BUI4"/>
<dbReference type="Reactome" id="R-HSA-1834949">
    <property type="pathway name" value="Cytosolic sensors of pathogen-associated DNA"/>
</dbReference>
<dbReference type="Reactome" id="R-HSA-73780">
    <property type="pathway name" value="RNA Polymerase III Chain Elongation"/>
</dbReference>
<dbReference type="Reactome" id="R-HSA-73980">
    <property type="pathway name" value="RNA Polymerase III Transcription Termination"/>
</dbReference>
<dbReference type="Reactome" id="R-HSA-749476">
    <property type="pathway name" value="RNA Polymerase III Abortive And Retractive Initiation"/>
</dbReference>
<dbReference type="Reactome" id="R-HSA-76061">
    <property type="pathway name" value="RNA Polymerase III Transcription Initiation From Type 1 Promoter"/>
</dbReference>
<dbReference type="Reactome" id="R-HSA-76066">
    <property type="pathway name" value="RNA Polymerase III Transcription Initiation From Type 2 Promoter"/>
</dbReference>
<dbReference type="Reactome" id="R-HSA-76071">
    <property type="pathway name" value="RNA Polymerase III Transcription Initiation From Type 3 Promoter"/>
</dbReference>
<dbReference type="SignaLink" id="Q9BUI4"/>
<dbReference type="SIGNOR" id="Q9BUI4"/>
<dbReference type="BioGRID-ORCS" id="10623">
    <property type="hits" value="749 hits in 1180 CRISPR screens"/>
</dbReference>
<dbReference type="ChiTaRS" id="POLR3C">
    <property type="organism name" value="human"/>
</dbReference>
<dbReference type="EvolutionaryTrace" id="Q9BUI4"/>
<dbReference type="GeneWiki" id="POLR3C"/>
<dbReference type="GenomeRNAi" id="10623"/>
<dbReference type="Pharos" id="Q9BUI4">
    <property type="development level" value="Tbio"/>
</dbReference>
<dbReference type="PRO" id="PR:Q9BUI4"/>
<dbReference type="Proteomes" id="UP000005640">
    <property type="component" value="Chromosome 1"/>
</dbReference>
<dbReference type="RNAct" id="Q9BUI4">
    <property type="molecule type" value="protein"/>
</dbReference>
<dbReference type="Bgee" id="ENSG00000186141">
    <property type="expression patterns" value="Expressed in primordial germ cell in gonad and 179 other cell types or tissues"/>
</dbReference>
<dbReference type="ExpressionAtlas" id="Q9BUI4">
    <property type="expression patterns" value="baseline and differential"/>
</dbReference>
<dbReference type="GO" id="GO:0005829">
    <property type="term" value="C:cytosol"/>
    <property type="evidence" value="ECO:0000304"/>
    <property type="project" value="Reactome"/>
</dbReference>
<dbReference type="GO" id="GO:0005654">
    <property type="term" value="C:nucleoplasm"/>
    <property type="evidence" value="ECO:0000314"/>
    <property type="project" value="HPA"/>
</dbReference>
<dbReference type="GO" id="GO:0005666">
    <property type="term" value="C:RNA polymerase III complex"/>
    <property type="evidence" value="ECO:0000314"/>
    <property type="project" value="UniProtKB"/>
</dbReference>
<dbReference type="GO" id="GO:0003899">
    <property type="term" value="F:DNA-directed RNA polymerase activity"/>
    <property type="evidence" value="ECO:0000304"/>
    <property type="project" value="ProtInc"/>
</dbReference>
<dbReference type="GO" id="GO:0003697">
    <property type="term" value="F:single-stranded DNA binding"/>
    <property type="evidence" value="ECO:0000314"/>
    <property type="project" value="UniProtKB"/>
</dbReference>
<dbReference type="GO" id="GO:0051607">
    <property type="term" value="P:defense response to virus"/>
    <property type="evidence" value="ECO:0007669"/>
    <property type="project" value="UniProtKB-KW"/>
</dbReference>
<dbReference type="GO" id="GO:0006351">
    <property type="term" value="P:DNA-templated transcription"/>
    <property type="evidence" value="ECO:0007669"/>
    <property type="project" value="InterPro"/>
</dbReference>
<dbReference type="GO" id="GO:0045087">
    <property type="term" value="P:innate immune response"/>
    <property type="evidence" value="ECO:0007669"/>
    <property type="project" value="UniProtKB-KW"/>
</dbReference>
<dbReference type="GO" id="GO:0045089">
    <property type="term" value="P:positive regulation of innate immune response"/>
    <property type="evidence" value="ECO:0000315"/>
    <property type="project" value="UniProtKB"/>
</dbReference>
<dbReference type="GO" id="GO:0032728">
    <property type="term" value="P:positive regulation of interferon-beta production"/>
    <property type="evidence" value="ECO:0000315"/>
    <property type="project" value="UniProtKB"/>
</dbReference>
<dbReference type="GO" id="GO:0006359">
    <property type="term" value="P:regulation of transcription by RNA polymerase III"/>
    <property type="evidence" value="ECO:0000304"/>
    <property type="project" value="ProtInc"/>
</dbReference>
<dbReference type="FunFam" id="1.10.10.10:FF:000199">
    <property type="entry name" value="DNA-directed RNA polymerase III subunit RPC3"/>
    <property type="match status" value="1"/>
</dbReference>
<dbReference type="FunFam" id="1.10.10.10:FF:000218">
    <property type="entry name" value="DNA-directed RNA polymerase III subunit RPC3"/>
    <property type="match status" value="1"/>
</dbReference>
<dbReference type="FunFam" id="1.10.10.10:FF:000256">
    <property type="entry name" value="DNA-directed RNA polymerase III subunit RPC3"/>
    <property type="match status" value="1"/>
</dbReference>
<dbReference type="FunFam" id="1.10.10.10:FF:000262">
    <property type="entry name" value="DNA-directed RNA polymerase III subunit RPC3"/>
    <property type="match status" value="1"/>
</dbReference>
<dbReference type="Gene3D" id="6.10.140.1450">
    <property type="match status" value="1"/>
</dbReference>
<dbReference type="Gene3D" id="1.10.10.10">
    <property type="entry name" value="Winged helix-like DNA-binding domain superfamily/Winged helix DNA-binding domain"/>
    <property type="match status" value="4"/>
</dbReference>
<dbReference type="InterPro" id="IPR055207">
    <property type="entry name" value="POLR3C_WHD"/>
</dbReference>
<dbReference type="InterPro" id="IPR013197">
    <property type="entry name" value="RNA_pol_III_RPC82-rel_HTH"/>
</dbReference>
<dbReference type="InterPro" id="IPR008806">
    <property type="entry name" value="RNA_pol_III_Rpc82_C"/>
</dbReference>
<dbReference type="InterPro" id="IPR039748">
    <property type="entry name" value="RPC3"/>
</dbReference>
<dbReference type="InterPro" id="IPR036388">
    <property type="entry name" value="WH-like_DNA-bd_sf"/>
</dbReference>
<dbReference type="PANTHER" id="PTHR12949:SF0">
    <property type="entry name" value="DNA-DIRECTED RNA POLYMERASE III SUBUNIT RPC3"/>
    <property type="match status" value="1"/>
</dbReference>
<dbReference type="PANTHER" id="PTHR12949">
    <property type="entry name" value="RNA POLYMERASE III DNA DIRECTED -RELATED"/>
    <property type="match status" value="1"/>
</dbReference>
<dbReference type="Pfam" id="PF08221">
    <property type="entry name" value="HTH_9"/>
    <property type="match status" value="1"/>
</dbReference>
<dbReference type="Pfam" id="PF22536">
    <property type="entry name" value="POLR3C_WHD"/>
    <property type="match status" value="1"/>
</dbReference>
<dbReference type="Pfam" id="PF05645">
    <property type="entry name" value="RNA_pol_Rpc82"/>
    <property type="match status" value="1"/>
</dbReference>
<dbReference type="Pfam" id="PF20912">
    <property type="entry name" value="RPC3_helical"/>
    <property type="match status" value="1"/>
</dbReference>